<protein>
    <recommendedName>
        <fullName>YTH domain-containing protein 1</fullName>
    </recommendedName>
    <alternativeName>
        <fullName>RA301-binding protein</fullName>
    </alternativeName>
    <alternativeName>
        <fullName evidence="13">Splicing factor YT521</fullName>
    </alternativeName>
</protein>
<organism>
    <name type="scientific">Rattus norvegicus</name>
    <name type="common">Rat</name>
    <dbReference type="NCBI Taxonomy" id="10116"/>
    <lineage>
        <taxon>Eukaryota</taxon>
        <taxon>Metazoa</taxon>
        <taxon>Chordata</taxon>
        <taxon>Craniata</taxon>
        <taxon>Vertebrata</taxon>
        <taxon>Euteleostomi</taxon>
        <taxon>Mammalia</taxon>
        <taxon>Eutheria</taxon>
        <taxon>Euarchontoglires</taxon>
        <taxon>Glires</taxon>
        <taxon>Rodentia</taxon>
        <taxon>Myomorpha</taxon>
        <taxon>Muroidea</taxon>
        <taxon>Muridae</taxon>
        <taxon>Murinae</taxon>
        <taxon>Rattus</taxon>
    </lineage>
</organism>
<reference key="1">
    <citation type="journal article" date="1998" name="Brain Res. Mol. Brain Res.">
        <title>Cloning of a gene, YT521, for a novel RNA splicing-related protein induced by hypoxia/reoxygenation.</title>
        <authorList>
            <person name="Imai Y."/>
            <person name="Matsuo N."/>
            <person name="Ogawa S."/>
            <person name="Tohyama M."/>
            <person name="Takagi T."/>
        </authorList>
    </citation>
    <scope>NUCLEOTIDE SEQUENCE [MRNA] (ISOFORM 2)</scope>
    <scope>FUNCTION</scope>
    <source>
        <tissue>Brain</tissue>
    </source>
</reference>
<reference key="2">
    <citation type="journal article" date="1999" name="Mol. Biol. Cell">
        <title>The interaction and colocalization of Sam68 with the splicing-associated factor YT521-B in nuclear dots is regulated by the Src family kinase p59fyn.</title>
        <authorList>
            <person name="Hartmann A.M."/>
            <person name="Nayler O."/>
            <person name="Schwaiger F.W."/>
            <person name="Obermeier A."/>
            <person name="Stamm S."/>
        </authorList>
    </citation>
    <scope>NUCLEOTIDE SEQUENCE [MRNA] (ISOFORM 1)</scope>
    <scope>FUNCTION</scope>
    <scope>TISSUE SPECIFICITY</scope>
    <scope>PHOSPHORYLATION</scope>
    <scope>INTERACTION WITH KHDRBS1; SRSF1; SRSF2 AND TRA2B</scope>
</reference>
<reference key="3">
    <citation type="journal article" date="2004" name="Nature">
        <title>Genome sequence of the Brown Norway rat yields insights into mammalian evolution.</title>
        <authorList>
            <person name="Gibbs R.A."/>
            <person name="Weinstock G.M."/>
            <person name="Metzker M.L."/>
            <person name="Muzny D.M."/>
            <person name="Sodergren E.J."/>
            <person name="Scherer S."/>
            <person name="Scott G."/>
            <person name="Steffen D."/>
            <person name="Worley K.C."/>
            <person name="Burch P.E."/>
            <person name="Okwuonu G."/>
            <person name="Hines S."/>
            <person name="Lewis L."/>
            <person name="Deramo C."/>
            <person name="Delgado O."/>
            <person name="Dugan-Rocha S."/>
            <person name="Miner G."/>
            <person name="Morgan M."/>
            <person name="Hawes A."/>
            <person name="Gill R."/>
            <person name="Holt R.A."/>
            <person name="Adams M.D."/>
            <person name="Amanatides P.G."/>
            <person name="Baden-Tillson H."/>
            <person name="Barnstead M."/>
            <person name="Chin S."/>
            <person name="Evans C.A."/>
            <person name="Ferriera S."/>
            <person name="Fosler C."/>
            <person name="Glodek A."/>
            <person name="Gu Z."/>
            <person name="Jennings D."/>
            <person name="Kraft C.L."/>
            <person name="Nguyen T."/>
            <person name="Pfannkoch C.M."/>
            <person name="Sitter C."/>
            <person name="Sutton G.G."/>
            <person name="Venter J.C."/>
            <person name="Woodage T."/>
            <person name="Smith D."/>
            <person name="Lee H.-M."/>
            <person name="Gustafson E."/>
            <person name="Cahill P."/>
            <person name="Kana A."/>
            <person name="Doucette-Stamm L."/>
            <person name="Weinstock K."/>
            <person name="Fechtel K."/>
            <person name="Weiss R.B."/>
            <person name="Dunn D.M."/>
            <person name="Green E.D."/>
            <person name="Blakesley R.W."/>
            <person name="Bouffard G.G."/>
            <person name="De Jong P.J."/>
            <person name="Osoegawa K."/>
            <person name="Zhu B."/>
            <person name="Marra M."/>
            <person name="Schein J."/>
            <person name="Bosdet I."/>
            <person name="Fjell C."/>
            <person name="Jones S."/>
            <person name="Krzywinski M."/>
            <person name="Mathewson C."/>
            <person name="Siddiqui A."/>
            <person name="Wye N."/>
            <person name="McPherson J."/>
            <person name="Zhao S."/>
            <person name="Fraser C.M."/>
            <person name="Shetty J."/>
            <person name="Shatsman S."/>
            <person name="Geer K."/>
            <person name="Chen Y."/>
            <person name="Abramzon S."/>
            <person name="Nierman W.C."/>
            <person name="Havlak P.H."/>
            <person name="Chen R."/>
            <person name="Durbin K.J."/>
            <person name="Egan A."/>
            <person name="Ren Y."/>
            <person name="Song X.-Z."/>
            <person name="Li B."/>
            <person name="Liu Y."/>
            <person name="Qin X."/>
            <person name="Cawley S."/>
            <person name="Cooney A.J."/>
            <person name="D'Souza L.M."/>
            <person name="Martin K."/>
            <person name="Wu J.Q."/>
            <person name="Gonzalez-Garay M.L."/>
            <person name="Jackson A.R."/>
            <person name="Kalafus K.J."/>
            <person name="McLeod M.P."/>
            <person name="Milosavljevic A."/>
            <person name="Virk D."/>
            <person name="Volkov A."/>
            <person name="Wheeler D.A."/>
            <person name="Zhang Z."/>
            <person name="Bailey J.A."/>
            <person name="Eichler E.E."/>
            <person name="Tuzun E."/>
            <person name="Birney E."/>
            <person name="Mongin E."/>
            <person name="Ureta-Vidal A."/>
            <person name="Woodwark C."/>
            <person name="Zdobnov E."/>
            <person name="Bork P."/>
            <person name="Suyama M."/>
            <person name="Torrents D."/>
            <person name="Alexandersson M."/>
            <person name="Trask B.J."/>
            <person name="Young J.M."/>
            <person name="Huang H."/>
            <person name="Wang H."/>
            <person name="Xing H."/>
            <person name="Daniels S."/>
            <person name="Gietzen D."/>
            <person name="Schmidt J."/>
            <person name="Stevens K."/>
            <person name="Vitt U."/>
            <person name="Wingrove J."/>
            <person name="Camara F."/>
            <person name="Mar Alba M."/>
            <person name="Abril J.F."/>
            <person name="Guigo R."/>
            <person name="Smit A."/>
            <person name="Dubchak I."/>
            <person name="Rubin E.M."/>
            <person name="Couronne O."/>
            <person name="Poliakov A."/>
            <person name="Huebner N."/>
            <person name="Ganten D."/>
            <person name="Goesele C."/>
            <person name="Hummel O."/>
            <person name="Kreitler T."/>
            <person name="Lee Y.-A."/>
            <person name="Monti J."/>
            <person name="Schulz H."/>
            <person name="Zimdahl H."/>
            <person name="Himmelbauer H."/>
            <person name="Lehrach H."/>
            <person name="Jacob H.J."/>
            <person name="Bromberg S."/>
            <person name="Gullings-Handley J."/>
            <person name="Jensen-Seaman M.I."/>
            <person name="Kwitek A.E."/>
            <person name="Lazar J."/>
            <person name="Pasko D."/>
            <person name="Tonellato P.J."/>
            <person name="Twigger S."/>
            <person name="Ponting C.P."/>
            <person name="Duarte J.M."/>
            <person name="Rice S."/>
            <person name="Goodstadt L."/>
            <person name="Beatson S.A."/>
            <person name="Emes R.D."/>
            <person name="Winter E.E."/>
            <person name="Webber C."/>
            <person name="Brandt P."/>
            <person name="Nyakatura G."/>
            <person name="Adetobi M."/>
            <person name="Chiaromonte F."/>
            <person name="Elnitski L."/>
            <person name="Eswara P."/>
            <person name="Hardison R.C."/>
            <person name="Hou M."/>
            <person name="Kolbe D."/>
            <person name="Makova K."/>
            <person name="Miller W."/>
            <person name="Nekrutenko A."/>
            <person name="Riemer C."/>
            <person name="Schwartz S."/>
            <person name="Taylor J."/>
            <person name="Yang S."/>
            <person name="Zhang Y."/>
            <person name="Lindpaintner K."/>
            <person name="Andrews T.D."/>
            <person name="Caccamo M."/>
            <person name="Clamp M."/>
            <person name="Clarke L."/>
            <person name="Curwen V."/>
            <person name="Durbin R.M."/>
            <person name="Eyras E."/>
            <person name="Searle S.M."/>
            <person name="Cooper G.M."/>
            <person name="Batzoglou S."/>
            <person name="Brudno M."/>
            <person name="Sidow A."/>
            <person name="Stone E.A."/>
            <person name="Payseur B.A."/>
            <person name="Bourque G."/>
            <person name="Lopez-Otin C."/>
            <person name="Puente X.S."/>
            <person name="Chakrabarti K."/>
            <person name="Chatterji S."/>
            <person name="Dewey C."/>
            <person name="Pachter L."/>
            <person name="Bray N."/>
            <person name="Yap V.B."/>
            <person name="Caspi A."/>
            <person name="Tesler G."/>
            <person name="Pevzner P.A."/>
            <person name="Haussler D."/>
            <person name="Roskin K.M."/>
            <person name="Baertsch R."/>
            <person name="Clawson H."/>
            <person name="Furey T.S."/>
            <person name="Hinrichs A.S."/>
            <person name="Karolchik D."/>
            <person name="Kent W.J."/>
            <person name="Rosenbloom K.R."/>
            <person name="Trumbower H."/>
            <person name="Weirauch M."/>
            <person name="Cooper D.N."/>
            <person name="Stenson P.D."/>
            <person name="Ma B."/>
            <person name="Brent M."/>
            <person name="Arumugam M."/>
            <person name="Shteynberg D."/>
            <person name="Copley R.R."/>
            <person name="Taylor M.S."/>
            <person name="Riethman H."/>
            <person name="Mudunuri U."/>
            <person name="Peterson J."/>
            <person name="Guyer M."/>
            <person name="Felsenfeld A."/>
            <person name="Old S."/>
            <person name="Mockrin S."/>
            <person name="Collins F.S."/>
        </authorList>
    </citation>
    <scope>NUCLEOTIDE SEQUENCE [LARGE SCALE GENOMIC DNA]</scope>
    <source>
        <strain>Brown Norway</strain>
    </source>
</reference>
<reference key="4">
    <citation type="submission" date="2005-07" db="EMBL/GenBank/DDBJ databases">
        <authorList>
            <person name="Mural R.J."/>
            <person name="Adams M.D."/>
            <person name="Myers E.W."/>
            <person name="Smith H.O."/>
            <person name="Venter J.C."/>
        </authorList>
    </citation>
    <scope>NUCLEOTIDE SEQUENCE [LARGE SCALE GENOMIC DNA]</scope>
</reference>
<reference key="5">
    <citation type="journal article" date="2000" name="J. Cell Biol.">
        <title>The ER repeat protein YT521-B localizes to a novel subnuclear compartment.</title>
        <authorList>
            <person name="Nayler O."/>
            <person name="Hartmann A.M."/>
            <person name="Stamm S."/>
        </authorList>
    </citation>
    <scope>SUBCELLULAR LOCATION</scope>
</reference>
<reference key="6">
    <citation type="journal article" date="2001" name="J. Biol. Chem.">
        <title>The STAR/GSG family protein rSLM-2 regulates the selection of alternative splice sites.</title>
        <authorList>
            <person name="Stoss O."/>
            <person name="Olbrich M."/>
            <person name="Hartmann A.M."/>
            <person name="Koenig H."/>
            <person name="Memmott J."/>
            <person name="Andreadis A."/>
            <person name="Stamm S."/>
        </authorList>
    </citation>
    <scope>INTERACTION WITH KHDRBS3</scope>
    <source>
        <tissue>Brain</tissue>
    </source>
</reference>
<reference key="7">
    <citation type="journal article" date="2009" name="J. Biol. Chem.">
        <title>Heterogeneous nuclear ribonucleoprotein G regulates splice site selection by binding to CC(A/C)-rich regions in pre-mRNA.</title>
        <authorList>
            <person name="Heinrich B."/>
            <person name="Zhang Z."/>
            <person name="Raitskin O."/>
            <person name="Hiller M."/>
            <person name="Benderska N."/>
            <person name="Hartmann A.M."/>
            <person name="Bracco L."/>
            <person name="Elliott D."/>
            <person name="Ben-Ari S."/>
            <person name="Soreq H."/>
            <person name="Sperling J."/>
            <person name="Sperling R."/>
            <person name="Stamm S."/>
        </authorList>
    </citation>
    <scope>INTERACTION WITH RBMX</scope>
</reference>
<reference key="8">
    <citation type="journal article" date="2012" name="Nat. Commun.">
        <title>Quantitative maps of protein phosphorylation sites across 14 different rat organs and tissues.</title>
        <authorList>
            <person name="Lundby A."/>
            <person name="Secher A."/>
            <person name="Lage K."/>
            <person name="Nordsborg N.B."/>
            <person name="Dmytriyev A."/>
            <person name="Lundby C."/>
            <person name="Olsen J.V."/>
        </authorList>
    </citation>
    <scope>PHOSPHORYLATION [LARGE SCALE ANALYSIS] AT SER-35 AND SER-311</scope>
    <scope>IDENTIFICATION BY MASS SPECTROMETRY [LARGE SCALE ANALYSIS]</scope>
</reference>
<reference evidence="15" key="9">
    <citation type="journal article" date="2014" name="Nucleic Acids Res.">
        <title>Solution structure of the YTH domain in complex with N6-methyladenosine RNA: a reader of methylated RNA.</title>
        <authorList>
            <person name="Theler D."/>
            <person name="Dominguez C."/>
            <person name="Blatter M."/>
            <person name="Boudet J."/>
            <person name="Allain F.H."/>
        </authorList>
    </citation>
    <scope>STRUCTURE BY NMR OF 347-502</scope>
    <scope>FUNCTION</scope>
    <scope>RNA-BINDING</scope>
</reference>
<dbReference type="EMBL" id="D78303">
    <property type="protein sequence ID" value="BAA23885.1"/>
    <property type="molecule type" value="mRNA"/>
</dbReference>
<dbReference type="EMBL" id="AF144731">
    <property type="protein sequence ID" value="AAD55973.1"/>
    <property type="molecule type" value="mRNA"/>
</dbReference>
<dbReference type="EMBL" id="AABR06078005">
    <property type="status" value="NOT_ANNOTATED_CDS"/>
    <property type="molecule type" value="Genomic_DNA"/>
</dbReference>
<dbReference type="EMBL" id="CH473981">
    <property type="protein sequence ID" value="EDL89830.1"/>
    <property type="molecule type" value="Genomic_DNA"/>
</dbReference>
<dbReference type="RefSeq" id="NP_596914.1">
    <property type="nucleotide sequence ID" value="NM_133423.1"/>
</dbReference>
<dbReference type="RefSeq" id="XP_006250870.1">
    <molecule id="Q9QY02-2"/>
    <property type="nucleotide sequence ID" value="XM_006250808.4"/>
</dbReference>
<dbReference type="PDB" id="2MTV">
    <property type="method" value="NMR"/>
    <property type="chains" value="A=347-502"/>
</dbReference>
<dbReference type="PDBsum" id="2MTV"/>
<dbReference type="BMRB" id="Q9QY02"/>
<dbReference type="SMR" id="Q9QY02"/>
<dbReference type="BioGRID" id="251046">
    <property type="interactions" value="1"/>
</dbReference>
<dbReference type="FunCoup" id="Q9QY02">
    <property type="interactions" value="4238"/>
</dbReference>
<dbReference type="STRING" id="10116.ENSRNOP00000002736"/>
<dbReference type="CarbonylDB" id="Q9QY02"/>
<dbReference type="iPTMnet" id="Q9QY02"/>
<dbReference type="PhosphoSitePlus" id="Q9QY02"/>
<dbReference type="PaxDb" id="10116-ENSRNOP00000002736"/>
<dbReference type="Ensembl" id="ENSRNOT00000110796.1">
    <molecule id="Q9QY02-2"/>
    <property type="protein sequence ID" value="ENSRNOP00000080807.1"/>
    <property type="gene ID" value="ENSRNOG00000001996.8"/>
</dbReference>
<dbReference type="Ensembl" id="ENSRNOT00000119155.1">
    <molecule id="Q9QY02-1"/>
    <property type="protein sequence ID" value="ENSRNOP00000095873.1"/>
    <property type="gene ID" value="ENSRNOG00000001996.8"/>
</dbReference>
<dbReference type="GeneID" id="170956"/>
<dbReference type="KEGG" id="rno:170956"/>
<dbReference type="UCSC" id="RGD:621706">
    <molecule id="Q9QY02-1"/>
    <property type="organism name" value="rat"/>
</dbReference>
<dbReference type="AGR" id="RGD:621706"/>
<dbReference type="CTD" id="91746"/>
<dbReference type="RGD" id="621706">
    <property type="gene designation" value="Ythdc1"/>
</dbReference>
<dbReference type="eggNOG" id="KOG1902">
    <property type="taxonomic scope" value="Eukaryota"/>
</dbReference>
<dbReference type="GeneTree" id="ENSGT00940000155803"/>
<dbReference type="HOGENOM" id="CLU_029591_0_0_1"/>
<dbReference type="InParanoid" id="Q9QY02"/>
<dbReference type="OrthoDB" id="5842105at2759"/>
<dbReference type="TreeFam" id="TF325590"/>
<dbReference type="EvolutionaryTrace" id="Q9QY02"/>
<dbReference type="PRO" id="PR:Q9QY02"/>
<dbReference type="Proteomes" id="UP000002494">
    <property type="component" value="Chromosome 14"/>
</dbReference>
<dbReference type="Proteomes" id="UP000234681">
    <property type="component" value="Chromosome 14"/>
</dbReference>
<dbReference type="Bgee" id="ENSRNOG00000001996">
    <property type="expression patterns" value="Expressed in thymus and 20 other cell types or tissues"/>
</dbReference>
<dbReference type="GO" id="GO:0016604">
    <property type="term" value="C:nuclear body"/>
    <property type="evidence" value="ECO:0000314"/>
    <property type="project" value="RGD"/>
</dbReference>
<dbReference type="GO" id="GO:0016607">
    <property type="term" value="C:nuclear speck"/>
    <property type="evidence" value="ECO:0000250"/>
    <property type="project" value="UniProtKB"/>
</dbReference>
<dbReference type="GO" id="GO:0005654">
    <property type="term" value="C:nucleoplasm"/>
    <property type="evidence" value="ECO:0000314"/>
    <property type="project" value="RGD"/>
</dbReference>
<dbReference type="GO" id="GO:0005634">
    <property type="term" value="C:nucleus"/>
    <property type="evidence" value="ECO:0000250"/>
    <property type="project" value="UniProtKB"/>
</dbReference>
<dbReference type="GO" id="GO:0003729">
    <property type="term" value="F:mRNA binding"/>
    <property type="evidence" value="ECO:0000318"/>
    <property type="project" value="GO_Central"/>
</dbReference>
<dbReference type="GO" id="GO:1990247">
    <property type="term" value="F:N6-methyladenosine-containing RNA reader activity"/>
    <property type="evidence" value="ECO:0000314"/>
    <property type="project" value="UniProtKB"/>
</dbReference>
<dbReference type="GO" id="GO:0003723">
    <property type="term" value="F:RNA binding"/>
    <property type="evidence" value="ECO:0000250"/>
    <property type="project" value="UniProtKB"/>
</dbReference>
<dbReference type="GO" id="GO:0009048">
    <property type="term" value="P:dosage compensation by inactivation of X chromosome"/>
    <property type="evidence" value="ECO:0000250"/>
    <property type="project" value="UniProtKB"/>
</dbReference>
<dbReference type="GO" id="GO:0001701">
    <property type="term" value="P:in utero embryonic development"/>
    <property type="evidence" value="ECO:0000266"/>
    <property type="project" value="RGD"/>
</dbReference>
<dbReference type="GO" id="GO:0110104">
    <property type="term" value="P:mRNA alternative polyadenylation"/>
    <property type="evidence" value="ECO:0000266"/>
    <property type="project" value="RGD"/>
</dbReference>
<dbReference type="GO" id="GO:0006406">
    <property type="term" value="P:mRNA export from nucleus"/>
    <property type="evidence" value="ECO:0000250"/>
    <property type="project" value="UniProtKB"/>
</dbReference>
<dbReference type="GO" id="GO:0006376">
    <property type="term" value="P:mRNA splice site recognition"/>
    <property type="evidence" value="ECO:0000250"/>
    <property type="project" value="UniProtKB"/>
</dbReference>
<dbReference type="GO" id="GO:0000398">
    <property type="term" value="P:mRNA splicing, via spliceosome"/>
    <property type="evidence" value="ECO:0000314"/>
    <property type="project" value="RGD"/>
</dbReference>
<dbReference type="GO" id="GO:0010608">
    <property type="term" value="P:post-transcriptional regulation of gene expression"/>
    <property type="evidence" value="ECO:0000250"/>
    <property type="project" value="UniProtKB"/>
</dbReference>
<dbReference type="GO" id="GO:0048160">
    <property type="term" value="P:primary follicle stage"/>
    <property type="evidence" value="ECO:0000266"/>
    <property type="project" value="RGD"/>
</dbReference>
<dbReference type="GO" id="GO:0000381">
    <property type="term" value="P:regulation of alternative mRNA splicing, via spliceosome"/>
    <property type="evidence" value="ECO:0000266"/>
    <property type="project" value="RGD"/>
</dbReference>
<dbReference type="GO" id="GO:0048024">
    <property type="term" value="P:regulation of mRNA splicing, via spliceosome"/>
    <property type="evidence" value="ECO:0000250"/>
    <property type="project" value="UniProtKB"/>
</dbReference>
<dbReference type="GO" id="GO:0007283">
    <property type="term" value="P:spermatogenesis"/>
    <property type="evidence" value="ECO:0000266"/>
    <property type="project" value="RGD"/>
</dbReference>
<dbReference type="CDD" id="cd21134">
    <property type="entry name" value="YTH"/>
    <property type="match status" value="1"/>
</dbReference>
<dbReference type="FunFam" id="3.10.590.10:FF:000002">
    <property type="entry name" value="YTH domain-containing protein 1 isoform X1"/>
    <property type="match status" value="1"/>
</dbReference>
<dbReference type="Gene3D" id="3.10.590.10">
    <property type="entry name" value="ph1033 like domains"/>
    <property type="match status" value="1"/>
</dbReference>
<dbReference type="InterPro" id="IPR007275">
    <property type="entry name" value="YTH_domain"/>
</dbReference>
<dbReference type="InterPro" id="IPR045168">
    <property type="entry name" value="YTH_prot"/>
</dbReference>
<dbReference type="PANTHER" id="PTHR12357:SF3">
    <property type="entry name" value="YTH DOMAIN-CONTAINING PROTEIN 1"/>
    <property type="match status" value="1"/>
</dbReference>
<dbReference type="PANTHER" id="PTHR12357">
    <property type="entry name" value="YTH YT521-B HOMOLOGY DOMAIN-CONTAINING"/>
    <property type="match status" value="1"/>
</dbReference>
<dbReference type="Pfam" id="PF04146">
    <property type="entry name" value="YTH"/>
    <property type="match status" value="1"/>
</dbReference>
<dbReference type="PROSITE" id="PS50882">
    <property type="entry name" value="YTH"/>
    <property type="match status" value="1"/>
</dbReference>
<comment type="function">
    <text evidence="1 2 6 10 11">Regulator of alternative splicing that specifically recognizes and binds N6-methyladenosine (m6A)-containing RNAs (PubMed:25389274). M6A is a modification present at internal sites of mRNAs and some non-coding RNAs and plays a role in the efficiency of mRNA splicing, processing and stability (PubMed:25389274). Acts as a key regulator of exon-inclusion or exon-skipping during alternative splicing via interaction with mRNA splicing factors SRSF3 and SRSF10 (By similarity). Specifically binds m6A-containing mRNAs and promotes recruitment of SRSF3 to its mRNA-binding elements adjacent to m6A sites, leading to exon-inclusion during alternative splicing (By similarity). In contrast, interaction with SRSF3 prevents interaction with SRSF10, a splicing factor that promotes exon skipping: this prevents SRSF10 from binding to its mRNA-binding sites close to m6A-containing regions, leading to inhibit exon skipping during alternative splicing (By similarity). May also regulate alternative splice site selection (PubMed:10564280, PubMed:9473574). Also involved in nuclear export of m6A-containing mRNAs via interaction with SRSF3: interaction with SRSF3 facilitates m6A-containing mRNA-binding to both SRSF3 and NXF1, promoting mRNA nuclear export (By similarity). Involved in S-adenosyl-L-methionine homeostasis by regulating expression of MAT2A transcripts, probably by binding m6A-containing MAT2A mRNAs (By similarity). Also recognizes and binds m6A on other RNA molecules (By similarity). Involved in random X inactivation mediated by Xist RNA: recognizes and binds m6A-containing Xist and promotes transcription repression activity of Xist (By similarity). Also recognizes and binds m6A-containing single-stranded DNA (By similarity). Involved in germline development: required for spermatogonial development in males and oocyte growth and maturation in females, probably via its role in alternative splicing (By similarity).</text>
</comment>
<comment type="subunit">
    <text evidence="1 2 6 8 9">Interacts with SRSF1 (PubMed:10564280). Interacts with SRSF2 (PubMed:10564280). Interacts with SRSF3 (By similarity). Interacts with SRSF7 (By similarity). Interacts with SRSF10 (By similarity). Interacts with CPSF6 (By similarity). Interacts with KHDRBS1/SAM68 (PubMed:10564280). Interacts with TRA2B (PubMed:10564280). Interacts with KHDRBS3 (PubMed:11118435). Interacts with EMD (By similarity). Interacts with RBMX (PubMed:19282290). Interacts with ZCCHC8 (By similarity).</text>
</comment>
<comment type="subcellular location">
    <subcellularLocation>
        <location evidence="7">Nucleus</location>
    </subcellularLocation>
    <subcellularLocation>
        <location evidence="2">Nucleus speckle</location>
    </subcellularLocation>
    <text evidence="7">Localizes to a novel subnuclear structure, the YT bodies.</text>
</comment>
<comment type="alternative products">
    <event type="alternative splicing"/>
    <isoform>
        <id>Q9QY02-1</id>
        <name>1</name>
        <name evidence="12">YT521-B</name>
        <sequence type="displayed"/>
    </isoform>
    <isoform>
        <id>Q9QY02-2</id>
        <name>2</name>
        <sequence type="described" ref="VSP_006819 VSP_006820"/>
    </isoform>
</comment>
<comment type="tissue specificity">
    <text evidence="6">Ubiquitous.</text>
</comment>
<comment type="domain">
    <text evidence="2">The YTH domain mediates RNA-binding.</text>
</comment>
<comment type="PTM">
    <text evidence="6">Tyrosine phosphorylated.</text>
</comment>
<keyword id="KW-0002">3D-structure</keyword>
<keyword id="KW-0025">Alternative splicing</keyword>
<keyword id="KW-1017">Isopeptide bond</keyword>
<keyword id="KW-0507">mRNA processing</keyword>
<keyword id="KW-0508">mRNA splicing</keyword>
<keyword id="KW-0539">Nucleus</keyword>
<keyword id="KW-0597">Phosphoprotein</keyword>
<keyword id="KW-1185">Reference proteome</keyword>
<keyword id="KW-0694">RNA-binding</keyword>
<keyword id="KW-0832">Ubl conjugation</keyword>
<name>YTDC1_RAT</name>
<evidence type="ECO:0000250" key="1">
    <source>
        <dbReference type="UniProtKB" id="E9Q5K9"/>
    </source>
</evidence>
<evidence type="ECO:0000250" key="2">
    <source>
        <dbReference type="UniProtKB" id="Q96MU7"/>
    </source>
</evidence>
<evidence type="ECO:0000250" key="3">
    <source>
        <dbReference type="UniProtKB" id="Q9Y5A9"/>
    </source>
</evidence>
<evidence type="ECO:0000255" key="4">
    <source>
        <dbReference type="PROSITE-ProRule" id="PRU00225"/>
    </source>
</evidence>
<evidence type="ECO:0000256" key="5">
    <source>
        <dbReference type="SAM" id="MobiDB-lite"/>
    </source>
</evidence>
<evidence type="ECO:0000269" key="6">
    <source>
    </source>
</evidence>
<evidence type="ECO:0000269" key="7">
    <source>
    </source>
</evidence>
<evidence type="ECO:0000269" key="8">
    <source>
    </source>
</evidence>
<evidence type="ECO:0000269" key="9">
    <source>
    </source>
</evidence>
<evidence type="ECO:0000269" key="10">
    <source>
    </source>
</evidence>
<evidence type="ECO:0000269" key="11">
    <source>
    </source>
</evidence>
<evidence type="ECO:0000303" key="12">
    <source>
    </source>
</evidence>
<evidence type="ECO:0000303" key="13">
    <source>
    </source>
</evidence>
<evidence type="ECO:0000305" key="14"/>
<evidence type="ECO:0007744" key="15">
    <source>
        <dbReference type="PDB" id="2MTV"/>
    </source>
</evidence>
<evidence type="ECO:0007744" key="16">
    <source>
    </source>
</evidence>
<evidence type="ECO:0007829" key="17">
    <source>
        <dbReference type="PDB" id="2MTV"/>
    </source>
</evidence>
<proteinExistence type="evidence at protein level"/>
<accession>Q9QY02</accession>
<accession>G3V690</accession>
<accession>O54729</accession>
<feature type="chain" id="PRO_0000223077" description="YTH domain-containing protein 1">
    <location>
        <begin position="1"/>
        <end position="738"/>
    </location>
</feature>
<feature type="domain" description="YTH" evidence="4">
    <location>
        <begin position="358"/>
        <end position="495"/>
    </location>
</feature>
<feature type="region of interest" description="Disordered" evidence="5">
    <location>
        <begin position="1"/>
        <end position="341"/>
    </location>
</feature>
<feature type="region of interest" description="Disordered" evidence="5">
    <location>
        <begin position="512"/>
        <end position="566"/>
    </location>
</feature>
<feature type="region of interest" description="Disordered" evidence="5">
    <location>
        <begin position="618"/>
        <end position="654"/>
    </location>
</feature>
<feature type="region of interest" description="Disordered" evidence="5">
    <location>
        <begin position="680"/>
        <end position="738"/>
    </location>
</feature>
<feature type="compositionally biased region" description="Basic and acidic residues" evidence="5">
    <location>
        <begin position="1"/>
        <end position="12"/>
    </location>
</feature>
<feature type="compositionally biased region" description="Basic and acidic residues" evidence="5">
    <location>
        <begin position="50"/>
        <end position="59"/>
    </location>
</feature>
<feature type="compositionally biased region" description="Polar residues" evidence="5">
    <location>
        <begin position="63"/>
        <end position="90"/>
    </location>
</feature>
<feature type="compositionally biased region" description="Basic and acidic residues" evidence="5">
    <location>
        <begin position="91"/>
        <end position="115"/>
    </location>
</feature>
<feature type="compositionally biased region" description="Basic and acidic residues" evidence="5">
    <location>
        <begin position="124"/>
        <end position="144"/>
    </location>
</feature>
<feature type="compositionally biased region" description="Basic and acidic residues" evidence="5">
    <location>
        <begin position="151"/>
        <end position="163"/>
    </location>
</feature>
<feature type="compositionally biased region" description="Basic and acidic residues" evidence="5">
    <location>
        <begin position="170"/>
        <end position="185"/>
    </location>
</feature>
<feature type="compositionally biased region" description="Polar residues" evidence="5">
    <location>
        <begin position="186"/>
        <end position="197"/>
    </location>
</feature>
<feature type="compositionally biased region" description="Acidic residues" evidence="5">
    <location>
        <begin position="198"/>
        <end position="257"/>
    </location>
</feature>
<feature type="compositionally biased region" description="Basic and acidic residues" evidence="5">
    <location>
        <begin position="258"/>
        <end position="273"/>
    </location>
</feature>
<feature type="compositionally biased region" description="Polar residues" evidence="5">
    <location>
        <begin position="283"/>
        <end position="292"/>
    </location>
</feature>
<feature type="compositionally biased region" description="Low complexity" evidence="5">
    <location>
        <begin position="318"/>
        <end position="328"/>
    </location>
</feature>
<feature type="compositionally biased region" description="Basic residues" evidence="5">
    <location>
        <begin position="512"/>
        <end position="526"/>
    </location>
</feature>
<feature type="compositionally biased region" description="Basic and acidic residues" evidence="5">
    <location>
        <begin position="527"/>
        <end position="566"/>
    </location>
</feature>
<feature type="compositionally biased region" description="Basic and acidic residues" evidence="5">
    <location>
        <begin position="690"/>
        <end position="738"/>
    </location>
</feature>
<feature type="binding site" evidence="3">
    <location>
        <begin position="364"/>
        <end position="366"/>
    </location>
    <ligand>
        <name>RNA</name>
        <dbReference type="ChEBI" id="CHEBI:33697"/>
    </ligand>
    <ligandPart>
        <name>N(6)-methyladenosine 5'-phosphate residue</name>
        <dbReference type="ChEBI" id="CHEBI:74449"/>
    </ligandPart>
</feature>
<feature type="binding site" evidence="2">
    <location>
        <position position="380"/>
    </location>
    <ligand>
        <name>RNA</name>
        <dbReference type="ChEBI" id="CHEBI:33697"/>
    </ligand>
    <ligandPart>
        <name>N(6)-methyladenosine 5'-phosphate residue</name>
        <dbReference type="ChEBI" id="CHEBI:74449"/>
    </ligandPart>
</feature>
<feature type="binding site" evidence="2">
    <location>
        <position position="431"/>
    </location>
    <ligand>
        <name>RNA</name>
        <dbReference type="ChEBI" id="CHEBI:33697"/>
    </ligand>
    <ligandPart>
        <name>N(6)-methyladenosine 5'-phosphate residue</name>
        <dbReference type="ChEBI" id="CHEBI:74449"/>
    </ligandPart>
</feature>
<feature type="binding site" evidence="2">
    <location>
        <position position="479"/>
    </location>
    <ligand>
        <name>RNA</name>
        <dbReference type="ChEBI" id="CHEBI:33697"/>
    </ligand>
    <ligandPart>
        <name>N(6)-methyladenosine 5'-phosphate residue</name>
        <dbReference type="ChEBI" id="CHEBI:74449"/>
    </ligandPart>
</feature>
<feature type="modified residue" description="Phosphoserine" evidence="16">
    <location>
        <position position="35"/>
    </location>
</feature>
<feature type="modified residue" description="Phosphoserine" evidence="2">
    <location>
        <position position="118"/>
    </location>
</feature>
<feature type="modified residue" description="Phosphoserine" evidence="2">
    <location>
        <position position="120"/>
    </location>
</feature>
<feature type="modified residue" description="Phosphoserine" evidence="2">
    <location>
        <position position="146"/>
    </location>
</feature>
<feature type="modified residue" description="Phosphothreonine" evidence="2">
    <location>
        <position position="148"/>
    </location>
</feature>
<feature type="modified residue" description="Phosphoserine" evidence="16">
    <location>
        <position position="311"/>
    </location>
</feature>
<feature type="modified residue" description="Phosphoserine" evidence="2">
    <location>
        <position position="318"/>
    </location>
</feature>
<feature type="modified residue" description="Phosphoserine" evidence="2">
    <location>
        <position position="320"/>
    </location>
</feature>
<feature type="modified residue" description="Phosphoserine" evidence="2">
    <location>
        <position position="321"/>
    </location>
</feature>
<feature type="modified residue" description="Phosphoserine" evidence="2">
    <location>
        <position position="323"/>
    </location>
</feature>
<feature type="modified residue" description="Phosphoserine" evidence="2">
    <location>
        <position position="427"/>
    </location>
</feature>
<feature type="modified residue" description="Phosphoserine" evidence="2">
    <location>
        <position position="438"/>
    </location>
</feature>
<feature type="modified residue" description="Phosphoserine" evidence="2">
    <location>
        <position position="548"/>
    </location>
</feature>
<feature type="cross-link" description="Glycyl lysine isopeptide (Lys-Gly) (interchain with G-Cter in SUMO2)" evidence="2">
    <location>
        <position position="96"/>
    </location>
</feature>
<feature type="splice variant" id="VSP_006819" description="In isoform 2." evidence="13">
    <location>
        <begin position="328"/>
        <end position="345"/>
    </location>
</feature>
<feature type="splice variant" id="VSP_006820" description="In isoform 2." evidence="13">
    <location>
        <begin position="577"/>
        <end position="584"/>
    </location>
</feature>
<feature type="sequence conflict" description="In Ref. 1; BAA23885 and 2; AAD55973." evidence="14" ref="1 2">
    <original>Y</original>
    <variation>S</variation>
    <location>
        <position position="353"/>
    </location>
</feature>
<feature type="helix" evidence="17">
    <location>
        <begin position="349"/>
        <end position="351"/>
    </location>
</feature>
<feature type="helix" evidence="17">
    <location>
        <begin position="352"/>
        <end position="355"/>
    </location>
</feature>
<feature type="strand" evidence="17">
    <location>
        <begin position="359"/>
        <end position="363"/>
    </location>
</feature>
<feature type="helix" evidence="17">
    <location>
        <begin position="368"/>
        <end position="377"/>
    </location>
</feature>
<feature type="helix" evidence="17">
    <location>
        <begin position="384"/>
        <end position="396"/>
    </location>
</feature>
<feature type="strand" evidence="17">
    <location>
        <begin position="400"/>
        <end position="405"/>
    </location>
</feature>
<feature type="turn" evidence="17">
    <location>
        <begin position="407"/>
        <end position="409"/>
    </location>
</feature>
<feature type="strand" evidence="17">
    <location>
        <begin position="411"/>
        <end position="418"/>
    </location>
</feature>
<feature type="helix" evidence="17">
    <location>
        <begin position="439"/>
        <end position="441"/>
    </location>
</feature>
<feature type="strand" evidence="17">
    <location>
        <begin position="446"/>
        <end position="452"/>
    </location>
</feature>
<feature type="helix" evidence="17">
    <location>
        <begin position="458"/>
        <end position="460"/>
    </location>
</feature>
<feature type="turn" evidence="17">
    <location>
        <begin position="467"/>
        <end position="470"/>
    </location>
</feature>
<feature type="strand" evidence="17">
    <location>
        <begin position="481"/>
        <end position="483"/>
    </location>
</feature>
<feature type="helix" evidence="17">
    <location>
        <begin position="485"/>
        <end position="494"/>
    </location>
</feature>
<feature type="helix" evidence="17">
    <location>
        <begin position="499"/>
        <end position="501"/>
    </location>
</feature>
<gene>
    <name type="primary">Ythdc1</name>
    <name evidence="13" type="synonym">Yt521</name>
</gene>
<sequence>MAADSREEKDGELNVLDDILTEVPEQDDELYNPESEQDKNEKKGSKRKSERMESIDTKRQKPSIHSRQLISKPLSSSVSNNKRIVSTKGKSVTEYKNEEYQRSERNKRLDADRKIRLSSSSSREPYKSQPEKPCLRKRDSERRAKSPTPDGSERIGLEVDRRASRSSQSSKEEGNSEEYGSDHETGSSASSEQGNNTENEEEGGEEDVEEDEEVDEDGDDDEEVDEDAEEEEDEEEDEEEEDEEEEEEEEEEYEQDERDQKEEGNDYDTRSEASDSGSESVSFTDGSVRSGSGTDGSDEKKKERKRARGISPIVFDRSGSSASESYAGSEKKHEKLSSSVRAVRKDQTSKLKYVLQDARFFLIKSNNHENVSLAKAKGVWSTLPVNEKKLNLAFRSARSVILIFSVRESGKFQGFARLSSESHHGGSPIHWVLPAGMSAKMLGGVFKIDWICRRELPFTKSAHLTNPWNEHKPVKIGRDGQEIELECGTQLCLLFPPDESIDLYQLIHKMRHKRRMHSQPRSRGRPSRREPVRDVGRRRPEDYDIHNSRKKPRIDYPPEFHQRPGYLKDPRYQEVDSFTNLIPNRRFSGVRRDVFLNGSYNDYVREFHNMGPPPPWQGMPPYPGIEQPPHHPYYQHHAPPPQAHPPYSGHHPVPHEARYRDKRVHDYDMRVDDFLRRTQAVVSGRRSRPRERDRERERDRPRDNRRDRERDRGRDRERERERICDRDRDRGERGRYRR</sequence>